<protein>
    <recommendedName>
        <fullName evidence="1">Fe/S biogenesis protein NfuA</fullName>
    </recommendedName>
</protein>
<accession>B7I8Q3</accession>
<organism>
    <name type="scientific">Acinetobacter baumannii (strain AB0057)</name>
    <dbReference type="NCBI Taxonomy" id="480119"/>
    <lineage>
        <taxon>Bacteria</taxon>
        <taxon>Pseudomonadati</taxon>
        <taxon>Pseudomonadota</taxon>
        <taxon>Gammaproteobacteria</taxon>
        <taxon>Moraxellales</taxon>
        <taxon>Moraxellaceae</taxon>
        <taxon>Acinetobacter</taxon>
        <taxon>Acinetobacter calcoaceticus/baumannii complex</taxon>
    </lineage>
</organism>
<dbReference type="EMBL" id="CP001182">
    <property type="protein sequence ID" value="ACJ40847.1"/>
    <property type="molecule type" value="Genomic_DNA"/>
</dbReference>
<dbReference type="RefSeq" id="WP_000102721.1">
    <property type="nucleotide sequence ID" value="NC_011586.2"/>
</dbReference>
<dbReference type="SMR" id="B7I8Q3"/>
<dbReference type="GeneID" id="92892942"/>
<dbReference type="KEGG" id="abn:AB57_1058"/>
<dbReference type="HOGENOM" id="CLU_094569_0_0_6"/>
<dbReference type="Proteomes" id="UP000007094">
    <property type="component" value="Chromosome"/>
</dbReference>
<dbReference type="GO" id="GO:0051539">
    <property type="term" value="F:4 iron, 4 sulfur cluster binding"/>
    <property type="evidence" value="ECO:0007669"/>
    <property type="project" value="UniProtKB-UniRule"/>
</dbReference>
<dbReference type="GO" id="GO:0005506">
    <property type="term" value="F:iron ion binding"/>
    <property type="evidence" value="ECO:0007669"/>
    <property type="project" value="InterPro"/>
</dbReference>
<dbReference type="GO" id="GO:0016226">
    <property type="term" value="P:iron-sulfur cluster assembly"/>
    <property type="evidence" value="ECO:0007669"/>
    <property type="project" value="UniProtKB-UniRule"/>
</dbReference>
<dbReference type="GO" id="GO:0051604">
    <property type="term" value="P:protein maturation"/>
    <property type="evidence" value="ECO:0007669"/>
    <property type="project" value="UniProtKB-UniRule"/>
</dbReference>
<dbReference type="Gene3D" id="3.30.300.130">
    <property type="entry name" value="Fe-S cluster assembly (FSCA)"/>
    <property type="match status" value="1"/>
</dbReference>
<dbReference type="Gene3D" id="2.60.300.12">
    <property type="entry name" value="HesB-like domain"/>
    <property type="match status" value="1"/>
</dbReference>
<dbReference type="HAMAP" id="MF_01637">
    <property type="entry name" value="Fe_S_biogen_NfuA"/>
    <property type="match status" value="1"/>
</dbReference>
<dbReference type="InterPro" id="IPR017726">
    <property type="entry name" value="Fe/S_biogenesis_protein_NfuA"/>
</dbReference>
<dbReference type="InterPro" id="IPR000361">
    <property type="entry name" value="FeS_biogenesis"/>
</dbReference>
<dbReference type="InterPro" id="IPR034904">
    <property type="entry name" value="FSCA_dom_sf"/>
</dbReference>
<dbReference type="InterPro" id="IPR035903">
    <property type="entry name" value="HesB-like_dom_sf"/>
</dbReference>
<dbReference type="InterPro" id="IPR001075">
    <property type="entry name" value="NIF_FeS_clus_asmbl_NifU_C"/>
</dbReference>
<dbReference type="NCBIfam" id="TIGR03341">
    <property type="entry name" value="YhgI_GntY"/>
    <property type="match status" value="1"/>
</dbReference>
<dbReference type="PANTHER" id="PTHR11178:SF51">
    <property type="entry name" value="FE_S BIOGENESIS PROTEIN NFUA"/>
    <property type="match status" value="1"/>
</dbReference>
<dbReference type="PANTHER" id="PTHR11178">
    <property type="entry name" value="IRON-SULFUR CLUSTER SCAFFOLD PROTEIN NFU-RELATED"/>
    <property type="match status" value="1"/>
</dbReference>
<dbReference type="Pfam" id="PF01521">
    <property type="entry name" value="Fe-S_biosyn"/>
    <property type="match status" value="1"/>
</dbReference>
<dbReference type="Pfam" id="PF01106">
    <property type="entry name" value="NifU"/>
    <property type="match status" value="1"/>
</dbReference>
<dbReference type="SUPFAM" id="SSF117916">
    <property type="entry name" value="Fe-S cluster assembly (FSCA) domain-like"/>
    <property type="match status" value="1"/>
</dbReference>
<dbReference type="SUPFAM" id="SSF89360">
    <property type="entry name" value="HesB-like domain"/>
    <property type="match status" value="1"/>
</dbReference>
<sequence length="212" mass="23100">MSTENTNTAVAEEIPNLLITPSAQEYLHELLAKQNTPGIGVRIFVEHPGTPRAECCMAYSAPEEVVPTDYKQDYPDFPAYIDAPSIPYLLDAVIDYNKDRFGGQLTFRAPNSKVPRVGPDASIEERITYVLQAEINPGLAGHGGNCSLVEVQDDPEHGLTAVLKFGGGCQGCSAIDVTLKQGVETTLKEHIPELQRVVDQTDHTQAEGAYFK</sequence>
<keyword id="KW-0004">4Fe-4S</keyword>
<keyword id="KW-0408">Iron</keyword>
<keyword id="KW-0411">Iron-sulfur</keyword>
<keyword id="KW-0479">Metal-binding</keyword>
<feature type="chain" id="PRO_1000186728" description="Fe/S biogenesis protein NfuA">
    <location>
        <begin position="1"/>
        <end position="212"/>
    </location>
</feature>
<feature type="binding site" evidence="1">
    <location>
        <position position="169"/>
    </location>
    <ligand>
        <name>[4Fe-4S] cluster</name>
        <dbReference type="ChEBI" id="CHEBI:49883"/>
    </ligand>
</feature>
<feature type="binding site" evidence="1">
    <location>
        <position position="172"/>
    </location>
    <ligand>
        <name>[4Fe-4S] cluster</name>
        <dbReference type="ChEBI" id="CHEBI:49883"/>
    </ligand>
</feature>
<gene>
    <name evidence="1" type="primary">nfuA</name>
    <name type="ordered locus">AB57_1058</name>
</gene>
<reference key="1">
    <citation type="journal article" date="2008" name="J. Bacteriol.">
        <title>Comparative genome sequence analysis of multidrug-resistant Acinetobacter baumannii.</title>
        <authorList>
            <person name="Adams M.D."/>
            <person name="Goglin K."/>
            <person name="Molyneaux N."/>
            <person name="Hujer K.M."/>
            <person name="Lavender H."/>
            <person name="Jamison J.J."/>
            <person name="MacDonald I.J."/>
            <person name="Martin K.M."/>
            <person name="Russo T."/>
            <person name="Campagnari A.A."/>
            <person name="Hujer A.M."/>
            <person name="Bonomo R.A."/>
            <person name="Gill S.R."/>
        </authorList>
    </citation>
    <scope>NUCLEOTIDE SEQUENCE [LARGE SCALE GENOMIC DNA]</scope>
    <source>
        <strain>AB0057</strain>
    </source>
</reference>
<evidence type="ECO:0000255" key="1">
    <source>
        <dbReference type="HAMAP-Rule" id="MF_01637"/>
    </source>
</evidence>
<proteinExistence type="inferred from homology"/>
<comment type="function">
    <text evidence="1">Involved in iron-sulfur cluster biogenesis. Binds a 4Fe-4S cluster, can transfer this cluster to apoproteins, and thereby intervenes in the maturation of Fe/S proteins. Could also act as a scaffold/chaperone for damaged Fe/S proteins.</text>
</comment>
<comment type="cofactor">
    <cofactor evidence="1">
        <name>[4Fe-4S] cluster</name>
        <dbReference type="ChEBI" id="CHEBI:49883"/>
    </cofactor>
    <text evidence="1">Binds 1 [4Fe-4S] cluster per subunit. The cluster is presumably bound at the interface of two monomers.</text>
</comment>
<comment type="subunit">
    <text evidence="1">Homodimer.</text>
</comment>
<comment type="similarity">
    <text evidence="1">Belongs to the NfuA family.</text>
</comment>
<name>NFUA_ACIB5</name>